<accession>P10501</accession>
<accession>B3SRX1</accession>
<organism>
    <name type="scientific">Rotavirus A (strain RVA/Human/United Kingdom/ST3/1975/G4P2A[6])</name>
    <name type="common">RV-A</name>
    <name type="synonym">Rotavirus A (strain St. Thomas 3)</name>
    <dbReference type="NCBI Taxonomy" id="10960"/>
    <lineage>
        <taxon>Viruses</taxon>
        <taxon>Riboviria</taxon>
        <taxon>Orthornavirae</taxon>
        <taxon>Duplornaviricota</taxon>
        <taxon>Resentoviricetes</taxon>
        <taxon>Reovirales</taxon>
        <taxon>Sedoreoviridae</taxon>
        <taxon>Rotavirus</taxon>
        <taxon>Rotavirus A</taxon>
    </lineage>
</organism>
<organismHost>
    <name type="scientific">Homo sapiens</name>
    <name type="common">Human</name>
    <dbReference type="NCBI Taxonomy" id="9606"/>
</organismHost>
<evidence type="ECO:0000255" key="1"/>
<evidence type="ECO:0000255" key="2">
    <source>
        <dbReference type="HAMAP-Rule" id="MF_04131"/>
    </source>
</evidence>
<evidence type="ECO:0000305" key="3"/>
<dbReference type="EMBL" id="X13603">
    <property type="protein sequence ID" value="CAA31938.1"/>
    <property type="molecule type" value="Genomic_RNA"/>
</dbReference>
<dbReference type="EMBL" id="EF672616">
    <property type="protein sequence ID" value="ABV53296.1"/>
    <property type="molecule type" value="Genomic_RNA"/>
</dbReference>
<dbReference type="PIR" id="S02211">
    <property type="entry name" value="VGXRTH"/>
</dbReference>
<dbReference type="SMR" id="P10501"/>
<dbReference type="Proteomes" id="UP000007048">
    <property type="component" value="Genome"/>
</dbReference>
<dbReference type="GO" id="GO:0044166">
    <property type="term" value="C:host cell endoplasmic reticulum lumen"/>
    <property type="evidence" value="ECO:0007669"/>
    <property type="project" value="UniProtKB-SubCell"/>
</dbReference>
<dbReference type="GO" id="GO:0039621">
    <property type="term" value="C:T=13 icosahedral viral capsid"/>
    <property type="evidence" value="ECO:0007669"/>
    <property type="project" value="UniProtKB-UniRule"/>
</dbReference>
<dbReference type="GO" id="GO:0039624">
    <property type="term" value="C:viral outer capsid"/>
    <property type="evidence" value="ECO:0007669"/>
    <property type="project" value="UniProtKB-UniRule"/>
</dbReference>
<dbReference type="GO" id="GO:0046872">
    <property type="term" value="F:metal ion binding"/>
    <property type="evidence" value="ECO:0007669"/>
    <property type="project" value="UniProtKB-KW"/>
</dbReference>
<dbReference type="Gene3D" id="3.40.50.11130">
    <property type="entry name" value="Glycoprotein VP7, domain 1"/>
    <property type="match status" value="1"/>
</dbReference>
<dbReference type="Gene3D" id="2.60.120.800">
    <property type="entry name" value="Rotavirus outer-layer protein VP7, domain 2"/>
    <property type="match status" value="1"/>
</dbReference>
<dbReference type="HAMAP" id="MF_04130">
    <property type="entry name" value="Rota_VP7"/>
    <property type="match status" value="1"/>
</dbReference>
<dbReference type="HAMAP" id="MF_04131">
    <property type="entry name" value="Rota_VP7_A"/>
    <property type="match status" value="1"/>
</dbReference>
<dbReference type="InterPro" id="IPR001963">
    <property type="entry name" value="VP7"/>
</dbReference>
<dbReference type="InterPro" id="IPR042207">
    <property type="entry name" value="VP7_1"/>
</dbReference>
<dbReference type="InterPro" id="IPR042210">
    <property type="entry name" value="VP7_2"/>
</dbReference>
<dbReference type="Pfam" id="PF00434">
    <property type="entry name" value="VP7"/>
    <property type="match status" value="1"/>
</dbReference>
<feature type="signal peptide" evidence="2">
    <location>
        <begin position="1"/>
        <end position="50"/>
    </location>
</feature>
<feature type="chain" id="PRO_0000149606" description="Outer capsid glycoprotein VP7" evidence="2">
    <location>
        <begin position="51"/>
        <end position="326"/>
    </location>
</feature>
<feature type="region of interest" description="CNP motif; interaction with ITGAV/ITGB3" evidence="2">
    <location>
        <begin position="165"/>
        <end position="167"/>
    </location>
</feature>
<feature type="region of interest" description="GPR motif; interaction with ITGAX/ITGB2" evidence="2">
    <location>
        <begin position="253"/>
        <end position="255"/>
    </location>
</feature>
<feature type="binding site" evidence="2">
    <location>
        <position position="95"/>
    </location>
    <ligand>
        <name>Ca(2+)</name>
        <dbReference type="ChEBI" id="CHEBI:29108"/>
        <label>1</label>
    </ligand>
</feature>
<feature type="binding site" evidence="2">
    <location>
        <position position="177"/>
    </location>
    <ligand>
        <name>Ca(2+)</name>
        <dbReference type="ChEBI" id="CHEBI:29108"/>
        <label>2</label>
    </ligand>
</feature>
<feature type="binding site" evidence="2">
    <location>
        <position position="206"/>
    </location>
    <ligand>
        <name>Ca(2+)</name>
        <dbReference type="ChEBI" id="CHEBI:29108"/>
        <label>1</label>
    </ligand>
</feature>
<feature type="binding site" evidence="2">
    <location>
        <position position="214"/>
    </location>
    <ligand>
        <name>Ca(2+)</name>
        <dbReference type="ChEBI" id="CHEBI:29108"/>
        <label>1</label>
    </ligand>
</feature>
<feature type="binding site" evidence="2">
    <location>
        <position position="216"/>
    </location>
    <ligand>
        <name>Ca(2+)</name>
        <dbReference type="ChEBI" id="CHEBI:29108"/>
        <label>1</label>
    </ligand>
</feature>
<feature type="binding site" evidence="2">
    <location>
        <position position="228"/>
    </location>
    <ligand>
        <name>Ca(2+)</name>
        <dbReference type="ChEBI" id="CHEBI:29108"/>
        <label>2</label>
    </ligand>
</feature>
<feature type="binding site" evidence="2">
    <location>
        <position position="229"/>
    </location>
    <ligand>
        <name>Ca(2+)</name>
        <dbReference type="ChEBI" id="CHEBI:29108"/>
        <label>2</label>
    </ligand>
</feature>
<feature type="binding site" evidence="2">
    <location>
        <position position="231"/>
    </location>
    <ligand>
        <name>Ca(2+)</name>
        <dbReference type="ChEBI" id="CHEBI:29108"/>
        <label>2</label>
    </ligand>
</feature>
<feature type="binding site" evidence="2">
    <location>
        <position position="301"/>
    </location>
    <ligand>
        <name>Ca(2+)</name>
        <dbReference type="ChEBI" id="CHEBI:29108"/>
        <label>2</label>
    </ligand>
</feature>
<feature type="glycosylation site" description="N-linked (GlcNAc...) asparagine; by host" evidence="1">
    <location>
        <position position="69"/>
    </location>
</feature>
<feature type="glycosylation site" description="N-linked (GlcNAc...) asparagine; by host" evidence="1">
    <location>
        <position position="238"/>
    </location>
</feature>
<feature type="disulfide bond" evidence="2">
    <location>
        <begin position="82"/>
        <end position="135"/>
    </location>
</feature>
<feature type="disulfide bond" evidence="2">
    <location>
        <begin position="165"/>
        <end position="249"/>
    </location>
</feature>
<feature type="disulfide bond" evidence="2">
    <location>
        <begin position="191"/>
        <end position="244"/>
    </location>
</feature>
<feature type="disulfide bond" evidence="2">
    <location>
        <begin position="196"/>
        <end position="207"/>
    </location>
</feature>
<feature type="splice variant" id="VSP_038627" description="In isoform 2." evidence="3">
    <location>
        <begin position="1"/>
        <end position="29"/>
    </location>
</feature>
<feature type="sequence conflict" description="In Ref. 2." evidence="3" ref="2">
    <original>T</original>
    <variation>A</variation>
    <location>
        <position position="38"/>
    </location>
</feature>
<feature type="sequence conflict" description="In Ref. 2." evidence="3" ref="2">
    <original>F</original>
    <variation>S</variation>
    <location>
        <position position="78"/>
    </location>
</feature>
<feature type="sequence conflict" description="In Ref. 1; CAA31938." evidence="3" ref="1">
    <original>S</original>
    <variation>F</variation>
    <location>
        <position position="146"/>
    </location>
</feature>
<feature type="sequence conflict" description="In Ref. 3; ABV53296." evidence="3" ref="3">
    <original>S</original>
    <variation>L</variation>
    <location>
        <position position="319"/>
    </location>
</feature>
<proteinExistence type="inferred from homology"/>
<sequence>MYGIEYTTVLFYLISFVLVSYILKTIIKIMDYIIYRITFVIVVLSVLSNAQNYGINLPITGSMDTAYANSTQDNNFLFSTLCLYYPSEAPTQISDTEWKDTLSQLFLTKGWPTGSVYFNEYSNVLEFSIDPKLYCDYNVVLIRFVSGEELDISELADLILNEWLCNPMDITLYYYQQTGEANKWISMGSSCTVKVCPLNTQTLGIGCQTTNTATFETVADSEKLAIIDVVDSVNHKLNITSTTCTIRNCNKLGPRENVAIIQVGGSNILDITADPTTSPQTERMMRVNWKKWWQVFYTVVDYINQIVQVMSKRSRSLDSSSFYYRV</sequence>
<reference key="1">
    <citation type="journal article" date="1989" name="Nucleic Acids Res.">
        <title>Rotavirus serotype IV: nucleotide sequence of genomic segment nine of the St Thomas 3 strain.</title>
        <authorList>
            <person name="Reddy D.A."/>
            <person name="Greenberg H.B."/>
            <person name="Bellamy A.R."/>
        </authorList>
    </citation>
    <scope>NUCLEOTIDE SEQUENCE [GENOMIC RNA]</scope>
</reference>
<reference key="2">
    <citation type="journal article" date="1987" name="Virology">
        <title>Comparison of the amino acid sequences of the major neutralization protein of four human rotavirus serotypes.</title>
        <authorList>
            <person name="Green K.Y."/>
            <person name="Midthun K."/>
            <person name="Gorziglia M."/>
            <person name="Hoshino Y."/>
            <person name="Kapikian A.Z."/>
            <person name="Chanock R.M."/>
            <person name="Flores J."/>
        </authorList>
    </citation>
    <scope>NUCLEOTIDE SEQUENCE [GENOMIC RNA]</scope>
</reference>
<reference key="3">
    <citation type="journal article" date="2008" name="J. Virol.">
        <title>Group A human rotavirus genomics: evidence that gene constellations are influenced by viral protein interactions.</title>
        <authorList>
            <person name="Heiman E.M."/>
            <person name="McDonald S.M."/>
            <person name="Barro M."/>
            <person name="Taraporewala Z.F."/>
            <person name="Bar-Magen T."/>
            <person name="Patton J.T."/>
        </authorList>
    </citation>
    <scope>NUCLEOTIDE SEQUENCE [GENOMIC RNA]</scope>
</reference>
<protein>
    <recommendedName>
        <fullName evidence="2">Outer capsid glycoprotein VP7</fullName>
    </recommendedName>
</protein>
<comment type="function">
    <text evidence="2">Calcium-binding protein that interacts with rotavirus cell receptors once the initial attachment by VP4 has been achieved. Rotavirus attachment and entry into the host cell probably involves multiple sequential contacts between the outer capsid proteins VP4 and VP7, and the cell receptors. Following entry into the host cell, low intracellular or intravesicular Ca(2+) concentration probably causes the calcium-stabilized VP7 trimers to dissociate from the virion. This step is probably necessary for the membrane-disrupting entry step and the release of VP4, which is locked onto the virion by VP7.</text>
</comment>
<comment type="subunit">
    <text evidence="2">Homotrimer; disulfide-linked. 2 Ca(2+) ions bound at each subunit interface in the trimer hold the trimer together. Interacts with the intermediate capsid protein VP6. Interacts with the outer capsid protein VP5*.</text>
</comment>
<comment type="subcellular location">
    <subcellularLocation>
        <location evidence="2">Virion</location>
    </subcellularLocation>
    <subcellularLocation>
        <location evidence="2">Host endoplasmic reticulum lumen</location>
    </subcellularLocation>
    <text evidence="2">The outer layer contains 780 copies of VP7, grouped as 260 trimers. Immature double-layered particles assembled in the cytoplasm bud across the membrane of the endoplasmic reticulum, acquiring during this process a transient lipid membrane that is modified with the ER resident viral glycoproteins NSP4 and VP7; these enveloped particles also contain VP4. As the particles move towards the interior of the ER cisternae, the transient lipid membrane and the non-structural protein NSP4 are lost, while the virus surface proteins VP4 and VP7 rearrange to form the outermost virus protein layer, yielding mature infectious triple-layered particles.</text>
</comment>
<comment type="alternative products">
    <event type="alternative initiation"/>
    <isoform>
        <id>P10501-1</id>
        <name>1</name>
        <sequence type="displayed"/>
    </isoform>
    <isoform>
        <id>P10501-2</id>
        <name>2</name>
        <sequence type="described" ref="VSP_038627"/>
    </isoform>
</comment>
<comment type="PTM">
    <text evidence="2">N-glycosylated.</text>
</comment>
<comment type="PTM">
    <text evidence="2">The N-terminus is blocked possibly by pyroglutamic acid.</text>
</comment>
<comment type="miscellaneous">
    <text evidence="2">Some rotavirus strains are neuraminidase-sensitive and require sialic acid to attach to the cell surface. Some rotavirus strains are integrin-dependent. Some rotavirus strains depend on ganglioside for their entry into the host cell. Hsp70 also seems to be involved in the entry of some strains.</text>
</comment>
<comment type="miscellaneous">
    <text evidence="2">In group A rotaviruses, VP7 defines the G serotype.</text>
</comment>
<comment type="miscellaneous">
    <molecule>Isoform 2</molecule>
    <text evidence="3">Produced by alternative initiation at Met-30 of isoform 1.</text>
</comment>
<comment type="similarity">
    <text evidence="2">Belongs to the rotavirus VP7 family.</text>
</comment>
<keyword id="KW-0024">Alternative initiation</keyword>
<keyword id="KW-0106">Calcium</keyword>
<keyword id="KW-0167">Capsid protein</keyword>
<keyword id="KW-1015">Disulfide bond</keyword>
<keyword id="KW-0325">Glycoprotein</keyword>
<keyword id="KW-1038">Host endoplasmic reticulum</keyword>
<keyword id="KW-0945">Host-virus interaction</keyword>
<keyword id="KW-0479">Metal-binding</keyword>
<keyword id="KW-1152">Outer capsid protein</keyword>
<keyword id="KW-0732">Signal</keyword>
<keyword id="KW-1146">T=13 icosahedral capsid protein</keyword>
<keyword id="KW-0946">Virion</keyword>
<name>VP7_ROTHT</name>